<evidence type="ECO:0000255" key="1">
    <source>
        <dbReference type="PROSITE-ProRule" id="PRU00805"/>
    </source>
</evidence>
<evidence type="ECO:0000305" key="2"/>
<comment type="catalytic activity">
    <reaction>
        <text>1-aminocyclopropane-1-carboxylate + L-ascorbate + O2 = ethene + L-dehydroascorbate + hydrogen cyanide + CO2 + 2 H2O</text>
        <dbReference type="Rhea" id="RHEA:23640"/>
        <dbReference type="ChEBI" id="CHEBI:15377"/>
        <dbReference type="ChEBI" id="CHEBI:15379"/>
        <dbReference type="ChEBI" id="CHEBI:16526"/>
        <dbReference type="ChEBI" id="CHEBI:18153"/>
        <dbReference type="ChEBI" id="CHEBI:18407"/>
        <dbReference type="ChEBI" id="CHEBI:38290"/>
        <dbReference type="ChEBI" id="CHEBI:58360"/>
        <dbReference type="ChEBI" id="CHEBI:58539"/>
        <dbReference type="EC" id="1.14.17.4"/>
    </reaction>
</comment>
<comment type="cofactor">
    <cofactor>
        <name>Fe cation</name>
        <dbReference type="ChEBI" id="CHEBI:24875"/>
    </cofactor>
</comment>
<comment type="pathway">
    <text>Alkene biosynthesis; ethylene biosynthesis via S-adenosyl-L-methionine; ethylene from S-adenosyl-L-methionine: step 2/2.</text>
</comment>
<comment type="tissue specificity">
    <text>Flowers.</text>
</comment>
<comment type="similarity">
    <text evidence="2">Belongs to the iron/ascorbate-dependent oxidoreductase family.</text>
</comment>
<protein>
    <recommendedName>
        <fullName>1-aminocyclopropane-1-carboxylate oxidase 3</fullName>
        <shortName>ACC oxidase 3</shortName>
        <ecNumber>1.14.17.4</ecNumber>
    </recommendedName>
    <alternativeName>
        <fullName>Ethylene-forming enzyme</fullName>
        <shortName>EFE</shortName>
    </alternativeName>
</protein>
<feature type="chain" id="PRO_0000067255" description="1-aminocyclopropane-1-carboxylate oxidase 3">
    <location>
        <begin position="1"/>
        <end position="320"/>
    </location>
</feature>
<feature type="domain" description="Fe2OG dioxygenase" evidence="1">
    <location>
        <begin position="154"/>
        <end position="254"/>
    </location>
</feature>
<feature type="binding site" evidence="1">
    <location>
        <position position="178"/>
    </location>
    <ligand>
        <name>Fe cation</name>
        <dbReference type="ChEBI" id="CHEBI:24875"/>
    </ligand>
</feature>
<feature type="binding site" evidence="1">
    <location>
        <position position="180"/>
    </location>
    <ligand>
        <name>Fe cation</name>
        <dbReference type="ChEBI" id="CHEBI:24875"/>
    </ligand>
</feature>
<feature type="binding site" evidence="1">
    <location>
        <position position="235"/>
    </location>
    <ligand>
        <name>Fe cation</name>
        <dbReference type="ChEBI" id="CHEBI:24875"/>
    </ligand>
</feature>
<gene>
    <name type="primary">ACO3</name>
</gene>
<reference key="1">
    <citation type="journal article" date="1996" name="Mol. Gen. Genet.">
        <title>Structure and expression of three genes encoding ACC oxidase homologs from melon (Cucumis melo L.).</title>
        <authorList>
            <person name="Lasserre E."/>
            <person name="Bouquin T."/>
            <person name="Hernandez J.A."/>
            <person name="Bull J."/>
            <person name="Pech J.-C."/>
            <person name="Balague C."/>
        </authorList>
    </citation>
    <scope>NUCLEOTIDE SEQUENCE [GENOMIC DNA]</scope>
    <source>
        <strain>cv. Cantaloup Charentais</strain>
        <tissue>Leaf</tissue>
    </source>
</reference>
<dbReference type="EC" id="1.14.17.4"/>
<dbReference type="EMBL" id="X95553">
    <property type="protein sequence ID" value="CAA64799.1"/>
    <property type="molecule type" value="Genomic_DNA"/>
</dbReference>
<dbReference type="PIR" id="S66176">
    <property type="entry name" value="S66176"/>
</dbReference>
<dbReference type="SMR" id="P54847"/>
<dbReference type="eggNOG" id="KOG0143">
    <property type="taxonomic scope" value="Eukaryota"/>
</dbReference>
<dbReference type="InParanoid" id="P54847"/>
<dbReference type="UniPathway" id="UPA00384">
    <property type="reaction ID" value="UER00563"/>
</dbReference>
<dbReference type="Proteomes" id="UP000089565">
    <property type="component" value="Unplaced"/>
</dbReference>
<dbReference type="Proteomes" id="UP000596662">
    <property type="component" value="Unplaced"/>
</dbReference>
<dbReference type="GO" id="GO:0009815">
    <property type="term" value="F:1-aminocyclopropane-1-carboxylate oxidase activity"/>
    <property type="evidence" value="ECO:0007669"/>
    <property type="project" value="UniProtKB-EC"/>
</dbReference>
<dbReference type="GO" id="GO:0031418">
    <property type="term" value="F:L-ascorbic acid binding"/>
    <property type="evidence" value="ECO:0007669"/>
    <property type="project" value="UniProtKB-KW"/>
</dbReference>
<dbReference type="GO" id="GO:0046872">
    <property type="term" value="F:metal ion binding"/>
    <property type="evidence" value="ECO:0007669"/>
    <property type="project" value="UniProtKB-KW"/>
</dbReference>
<dbReference type="GO" id="GO:0009693">
    <property type="term" value="P:ethylene biosynthetic process"/>
    <property type="evidence" value="ECO:0007669"/>
    <property type="project" value="UniProtKB-UniPathway"/>
</dbReference>
<dbReference type="GO" id="GO:0009835">
    <property type="term" value="P:fruit ripening"/>
    <property type="evidence" value="ECO:0007669"/>
    <property type="project" value="UniProtKB-KW"/>
</dbReference>
<dbReference type="FunFam" id="2.60.120.330:FF:000002">
    <property type="entry name" value="1-aminocyclopropane-1-carboxylate oxidase 1"/>
    <property type="match status" value="1"/>
</dbReference>
<dbReference type="Gene3D" id="2.60.120.330">
    <property type="entry name" value="B-lactam Antibiotic, Isopenicillin N Synthase, Chain"/>
    <property type="match status" value="1"/>
</dbReference>
<dbReference type="InterPro" id="IPR026992">
    <property type="entry name" value="DIOX_N"/>
</dbReference>
<dbReference type="InterPro" id="IPR044861">
    <property type="entry name" value="IPNS-like_FE2OG_OXY"/>
</dbReference>
<dbReference type="InterPro" id="IPR027443">
    <property type="entry name" value="IPNS-like_sf"/>
</dbReference>
<dbReference type="InterPro" id="IPR005123">
    <property type="entry name" value="Oxoglu/Fe-dep_dioxygenase_dom"/>
</dbReference>
<dbReference type="InterPro" id="IPR050295">
    <property type="entry name" value="Plant_2OG-oxidoreductases"/>
</dbReference>
<dbReference type="PANTHER" id="PTHR47991">
    <property type="entry name" value="OXOGLUTARATE/IRON-DEPENDENT DIOXYGENASE"/>
    <property type="match status" value="1"/>
</dbReference>
<dbReference type="Pfam" id="PF03171">
    <property type="entry name" value="2OG-FeII_Oxy"/>
    <property type="match status" value="1"/>
</dbReference>
<dbReference type="Pfam" id="PF14226">
    <property type="entry name" value="DIOX_N"/>
    <property type="match status" value="1"/>
</dbReference>
<dbReference type="SUPFAM" id="SSF51197">
    <property type="entry name" value="Clavaminate synthase-like"/>
    <property type="match status" value="1"/>
</dbReference>
<dbReference type="PROSITE" id="PS51471">
    <property type="entry name" value="FE2OG_OXY"/>
    <property type="match status" value="1"/>
</dbReference>
<sequence length="320" mass="36397">MEMDFPVINMNNLNGESRVSVLNQINDACENWGFFELVNHGISHELMDKVEKLTKEHYRKCMEQRFKEMVASKGLDSVETEINDTDWESTFFLRHLPVSNMSEIGDLDEEYKKVMKEFADELEKLAEEVLDLLCENLGLEKGYLKKVFYGSKGPNFGTKVSNYPPCPKPELIKGLRAHTDAGGLILLFQDDKVSGLHVLKDGKWVDVPPMHHSIVINLGDQLEVITNGKYKSVMHRVIAQEDGNRMSIASFYNPGNDAVIYPAPALVEGEQEKTKLYPKFVFDDYMKLYVGLKFQAKEPRFEAMKAMESTNLNMGPIATV</sequence>
<keyword id="KW-0266">Ethylene biosynthesis</keyword>
<keyword id="KW-0292">Fruit ripening</keyword>
<keyword id="KW-0408">Iron</keyword>
<keyword id="KW-0479">Metal-binding</keyword>
<keyword id="KW-0560">Oxidoreductase</keyword>
<keyword id="KW-1185">Reference proteome</keyword>
<keyword id="KW-0847">Vitamin C</keyword>
<proteinExistence type="evidence at transcript level"/>
<accession>P54847</accession>
<organism>
    <name type="scientific">Cucumis melo</name>
    <name type="common">Muskmelon</name>
    <dbReference type="NCBI Taxonomy" id="3656"/>
    <lineage>
        <taxon>Eukaryota</taxon>
        <taxon>Viridiplantae</taxon>
        <taxon>Streptophyta</taxon>
        <taxon>Embryophyta</taxon>
        <taxon>Tracheophyta</taxon>
        <taxon>Spermatophyta</taxon>
        <taxon>Magnoliopsida</taxon>
        <taxon>eudicotyledons</taxon>
        <taxon>Gunneridae</taxon>
        <taxon>Pentapetalae</taxon>
        <taxon>rosids</taxon>
        <taxon>fabids</taxon>
        <taxon>Cucurbitales</taxon>
        <taxon>Cucurbitaceae</taxon>
        <taxon>Benincaseae</taxon>
        <taxon>Cucumis</taxon>
    </lineage>
</organism>
<name>ACCO3_CUCME</name>